<name>TLP2_MANZA</name>
<evidence type="ECO:0000250" key="1">
    <source>
        <dbReference type="UniProtKB" id="P02883"/>
    </source>
</evidence>
<evidence type="ECO:0000250" key="2">
    <source>
        <dbReference type="UniProtKB" id="P83335"/>
    </source>
</evidence>
<evidence type="ECO:0000255" key="3"/>
<evidence type="ECO:0000269" key="4">
    <source>
    </source>
</evidence>
<evidence type="ECO:0000269" key="5">
    <source>
    </source>
</evidence>
<evidence type="ECO:0000305" key="6"/>
<comment type="function">
    <text evidence="5">Basic thaumatin-like protein. Does not exhibit beta-1,3-glucanase activity with laminarin as substrate.</text>
</comment>
<comment type="subunit">
    <text evidence="5">Monomer.</text>
</comment>
<comment type="mass spectrometry" mass="21578.0" method="MALDI" evidence="5"/>
<comment type="allergen">
    <text evidence="4 5">Causes an allergic reaction in human. Binds to IgE.</text>
</comment>
<comment type="miscellaneous">
    <text>On the 2D-gel the determined pI of this protein is: 9.5, its MW is: 22 kDa.</text>
</comment>
<comment type="similarity">
    <text evidence="3">Belongs to the thaumatin family.</text>
</comment>
<keyword id="KW-0020">Allergen</keyword>
<keyword id="KW-0903">Direct protein sequencing</keyword>
<keyword id="KW-1015">Disulfide bond</keyword>
<keyword id="KW-0568">Pathogenesis-related protein</keyword>
<keyword id="KW-0611">Plant defense</keyword>
<reference key="1">
    <citation type="journal article" date="2014" name="Mol. Nutr. Food Res.">
        <title>Identification and characterization of a basic thaumatin-like protein (TLP 2) as an allergen in sapodilla plum (Manilkara zapota).</title>
        <authorList>
            <person name="Hegde V.L."/>
            <person name="Ashok Kumar H.G."/>
            <person name="Sreenath K."/>
            <person name="Hegde M.L."/>
            <person name="Venkatesh Y.P."/>
        </authorList>
    </citation>
    <scope>PROTEIN SEQUENCE</scope>
    <scope>FUNCTION</scope>
    <scope>SUBUNIT</scope>
    <scope>MASS SPECTROMETRY</scope>
    <scope>ALLERGENICITY</scope>
    <source>
        <tissue>Fruit</tissue>
    </source>
</reference>
<reference evidence="6" key="2">
    <citation type="journal article" date="2002" name="J. Allergy Clin. Immunol.">
        <title>Oral allergy syndrome to sapodilla (Achras zapota).</title>
        <authorList>
            <person name="Hegde V.L."/>
            <person name="Venkatesh Y.P."/>
        </authorList>
    </citation>
    <scope>ALLERGENICITY</scope>
    <source>
        <strain evidence="4">cv. Kalipatti</strain>
        <tissue evidence="4">Fruit</tissue>
    </source>
</reference>
<sequence length="9" mass="1025">ATFDIQNNC</sequence>
<organism>
    <name type="scientific">Manilkara zapota</name>
    <name type="common">Sapodilla plum</name>
    <name type="synonym">Achras zapota</name>
    <dbReference type="NCBI Taxonomy" id="3741"/>
    <lineage>
        <taxon>Eukaryota</taxon>
        <taxon>Viridiplantae</taxon>
        <taxon>Streptophyta</taxon>
        <taxon>Embryophyta</taxon>
        <taxon>Tracheophyta</taxon>
        <taxon>Spermatophyta</taxon>
        <taxon>Magnoliopsida</taxon>
        <taxon>eudicotyledons</taxon>
        <taxon>Gunneridae</taxon>
        <taxon>Pentapetalae</taxon>
        <taxon>asterids</taxon>
        <taxon>Ericales</taxon>
        <taxon>Sapotaceae</taxon>
        <taxon>Sapotoideae</taxon>
        <taxon>Manilkara</taxon>
    </lineage>
</organism>
<feature type="chain" id="PRO_0000415952" description="Thaumatin-like protein 2">
    <location>
        <begin position="1"/>
        <end position="9" status="greater than"/>
    </location>
</feature>
<feature type="disulfide bond" evidence="1">
    <location>
        <begin position="9"/>
        <end status="unknown"/>
    </location>
</feature>
<feature type="non-terminal residue">
    <location>
        <position position="9"/>
    </location>
</feature>
<proteinExistence type="evidence at protein level"/>
<dbReference type="GO" id="GO:0006952">
    <property type="term" value="P:defense response"/>
    <property type="evidence" value="ECO:0007669"/>
    <property type="project" value="UniProtKB-KW"/>
</dbReference>
<protein>
    <recommendedName>
        <fullName evidence="2">Thaumatin-like protein 2</fullName>
    </recommendedName>
    <alternativeName>
        <fullName>Basic thaumatin-like protein</fullName>
    </alternativeName>
    <allergenName>Man z TLP2</allergenName>
</protein>
<accession>B3EWE5</accession>